<gene>
    <name type="primary">manB</name>
    <name type="ORF">DDB_G0278259</name>
</gene>
<accession>Q54YF7</accession>
<name>MANB_DICDI</name>
<sequence>MGKVLILFLFVLLLITFINCTNNKILNNENSSNEDNVINVFLIPHSHCDLGWVQTLEEYYSENVTVILDNVINTLIKDSSKKFNWAEIYYFETWWNEQSSFLQAQVRNLVNNGQLYFVGGGWAQNDEGATHYQAVINQMTLGHQFLLSEFGVVPEIGWQIDPFGPSTLTATLFSLMGFKYHVINRIDERIKYIYNDTPDIVGSGWMTTDRSFEFQWYPSHNDQELSIFTHVLDHHYNSPYLIYPNASNPNQSLTTGFDFESDPTQNPPINQSNIYERAAVFVEIMQQRSQLYRHNNLLIPFGNDFRFQNASLEFDNMDKLITYINSNSSWGVTIQYATLNEYFEKVESIEPPVEYADIVGQDLFVYTMCLASDYQAFNTCANWWSGYYTSYPLLKQTARDSDSLLRVGEMLYSLSCFYSNGFDFDFNIGFYALSMHRNVSGILTHHDAITGTAKEYVRVNYFQMLNEAQSLTLDYNIPDFVGFLLSNKSLNIDYQSNGSSILNSTNPGDIIAISFTNSIAWDRIETVSIEIPFVNMAVYDYQLNPIQSQIVQRFDKSNNWYLYFQVATPALGISTYFIVILSTDGEILNDNSKNLPTPIQSILSISNELLFNDNDDETTTTTIGNSNFNLNFKFDRDNNNLLTLNSYDDLFNNKIGIPISQHLIEYTSLSDDAYKFRVQGLPIPLTPINPQFYLTIGPVVQIVTIIYNNNCSQSYLIYNDTTSFNPFETDNDNNNNSRLIKNDQYFEIDNIVASGWDKEISMKFTTNINNQNIFYTNNGLEIMKRQWEIHWNDTFIWSEITSNFYPMINTGYIVDQQVSDYQQQLTILSKQTFGASSQTNGEFEVLLIRRSNYTQWSVHEPMNDTSNPSLRVLCIFGDPNFSNEIRTPHSILFENPLQPVYSLIPNSIPIEKYIDTYNTLFKPLQTSLPYNLHLLTFTKQWIDSPSIIMRLINIYEIGQSINFSKSINFNIGSGDNNNNNNNNNNNGFLTHYNISQIIETTLSANSELSNPTNNLVITLEPLEIKTFLLTLSPKQ</sequence>
<protein>
    <recommendedName>
        <fullName>Alpha-mannosidase B</fullName>
        <ecNumber>3.2.1.24</ecNumber>
    </recommendedName>
</protein>
<reference key="1">
    <citation type="journal article" date="2005" name="Nature">
        <title>The genome of the social amoeba Dictyostelium discoideum.</title>
        <authorList>
            <person name="Eichinger L."/>
            <person name="Pachebat J.A."/>
            <person name="Gloeckner G."/>
            <person name="Rajandream M.A."/>
            <person name="Sucgang R."/>
            <person name="Berriman M."/>
            <person name="Song J."/>
            <person name="Olsen R."/>
            <person name="Szafranski K."/>
            <person name="Xu Q."/>
            <person name="Tunggal B."/>
            <person name="Kummerfeld S."/>
            <person name="Madera M."/>
            <person name="Konfortov B.A."/>
            <person name="Rivero F."/>
            <person name="Bankier A.T."/>
            <person name="Lehmann R."/>
            <person name="Hamlin N."/>
            <person name="Davies R."/>
            <person name="Gaudet P."/>
            <person name="Fey P."/>
            <person name="Pilcher K."/>
            <person name="Chen G."/>
            <person name="Saunders D."/>
            <person name="Sodergren E.J."/>
            <person name="Davis P."/>
            <person name="Kerhornou A."/>
            <person name="Nie X."/>
            <person name="Hall N."/>
            <person name="Anjard C."/>
            <person name="Hemphill L."/>
            <person name="Bason N."/>
            <person name="Farbrother P."/>
            <person name="Desany B."/>
            <person name="Just E."/>
            <person name="Morio T."/>
            <person name="Rost R."/>
            <person name="Churcher C.M."/>
            <person name="Cooper J."/>
            <person name="Haydock S."/>
            <person name="van Driessche N."/>
            <person name="Cronin A."/>
            <person name="Goodhead I."/>
            <person name="Muzny D.M."/>
            <person name="Mourier T."/>
            <person name="Pain A."/>
            <person name="Lu M."/>
            <person name="Harper D."/>
            <person name="Lindsay R."/>
            <person name="Hauser H."/>
            <person name="James K.D."/>
            <person name="Quiles M."/>
            <person name="Madan Babu M."/>
            <person name="Saito T."/>
            <person name="Buchrieser C."/>
            <person name="Wardroper A."/>
            <person name="Felder M."/>
            <person name="Thangavelu M."/>
            <person name="Johnson D."/>
            <person name="Knights A."/>
            <person name="Loulseged H."/>
            <person name="Mungall K.L."/>
            <person name="Oliver K."/>
            <person name="Price C."/>
            <person name="Quail M.A."/>
            <person name="Urushihara H."/>
            <person name="Hernandez J."/>
            <person name="Rabbinowitsch E."/>
            <person name="Steffen D."/>
            <person name="Sanders M."/>
            <person name="Ma J."/>
            <person name="Kohara Y."/>
            <person name="Sharp S."/>
            <person name="Simmonds M.N."/>
            <person name="Spiegler S."/>
            <person name="Tivey A."/>
            <person name="Sugano S."/>
            <person name="White B."/>
            <person name="Walker D."/>
            <person name="Woodward J.R."/>
            <person name="Winckler T."/>
            <person name="Tanaka Y."/>
            <person name="Shaulsky G."/>
            <person name="Schleicher M."/>
            <person name="Weinstock G.M."/>
            <person name="Rosenthal A."/>
            <person name="Cox E.C."/>
            <person name="Chisholm R.L."/>
            <person name="Gibbs R.A."/>
            <person name="Loomis W.F."/>
            <person name="Platzer M."/>
            <person name="Kay R.R."/>
            <person name="Williams J.G."/>
            <person name="Dear P.H."/>
            <person name="Noegel A.A."/>
            <person name="Barrell B.G."/>
            <person name="Kuspa A."/>
        </authorList>
    </citation>
    <scope>NUCLEOTIDE SEQUENCE [LARGE SCALE GENOMIC DNA]</scope>
    <source>
        <strain>AX4</strain>
    </source>
</reference>
<keyword id="KW-0325">Glycoprotein</keyword>
<keyword id="KW-0326">Glycosidase</keyword>
<keyword id="KW-0378">Hydrolase</keyword>
<keyword id="KW-0479">Metal-binding</keyword>
<keyword id="KW-1185">Reference proteome</keyword>
<keyword id="KW-0964">Secreted</keyword>
<keyword id="KW-0732">Signal</keyword>
<keyword id="KW-0862">Zinc</keyword>
<proteinExistence type="inferred from homology"/>
<feature type="signal peptide" evidence="2">
    <location>
        <begin position="1"/>
        <end position="20"/>
    </location>
</feature>
<feature type="chain" id="PRO_0000327841" description="Alpha-mannosidase B">
    <location>
        <begin position="21"/>
        <end position="1035"/>
    </location>
</feature>
<feature type="active site" description="Nucleophile" evidence="1">
    <location>
        <position position="161"/>
    </location>
</feature>
<feature type="binding site" evidence="1">
    <location>
        <position position="47"/>
    </location>
    <ligand>
        <name>Zn(2+)</name>
        <dbReference type="ChEBI" id="CHEBI:29105"/>
    </ligand>
</feature>
<feature type="binding site" evidence="1">
    <location>
        <position position="49"/>
    </location>
    <ligand>
        <name>Zn(2+)</name>
        <dbReference type="ChEBI" id="CHEBI:29105"/>
    </ligand>
</feature>
<feature type="binding site" evidence="1">
    <location>
        <position position="161"/>
    </location>
    <ligand>
        <name>Zn(2+)</name>
        <dbReference type="ChEBI" id="CHEBI:29105"/>
    </ligand>
</feature>
<feature type="binding site" evidence="1">
    <location>
        <position position="446"/>
    </location>
    <ligand>
        <name>Zn(2+)</name>
        <dbReference type="ChEBI" id="CHEBI:29105"/>
    </ligand>
</feature>
<feature type="glycosylation site" description="N-linked (GlcNAc...) asparagine" evidence="2">
    <location>
        <position position="19"/>
    </location>
</feature>
<feature type="glycosylation site" description="N-linked (GlcNAc...) asparagine" evidence="2">
    <location>
        <position position="30"/>
    </location>
</feature>
<feature type="glycosylation site" description="N-linked (GlcNAc...) asparagine" evidence="2">
    <location>
        <position position="63"/>
    </location>
</feature>
<feature type="glycosylation site" description="N-linked (GlcNAc...) asparagine" evidence="2">
    <location>
        <position position="245"/>
    </location>
</feature>
<feature type="glycosylation site" description="N-linked (GlcNAc...) asparagine" evidence="2">
    <location>
        <position position="250"/>
    </location>
</feature>
<feature type="glycosylation site" description="N-linked (GlcNAc...) asparagine" evidence="2">
    <location>
        <position position="270"/>
    </location>
</feature>
<feature type="glycosylation site" description="N-linked (GlcNAc...) asparagine" evidence="2">
    <location>
        <position position="309"/>
    </location>
</feature>
<feature type="glycosylation site" description="N-linked (GlcNAc...) asparagine" evidence="2">
    <location>
        <position position="327"/>
    </location>
</feature>
<feature type="glycosylation site" description="N-linked (GlcNAc...) asparagine" evidence="2">
    <location>
        <position position="438"/>
    </location>
</feature>
<feature type="glycosylation site" description="N-linked (GlcNAc...) asparagine" evidence="2">
    <location>
        <position position="487"/>
    </location>
</feature>
<feature type="glycosylation site" description="N-linked (GlcNAc...) asparagine" evidence="2">
    <location>
        <position position="497"/>
    </location>
</feature>
<feature type="glycosylation site" description="N-linked (GlcNAc...) asparagine" evidence="2">
    <location>
        <position position="503"/>
    </location>
</feature>
<feature type="glycosylation site" description="N-linked (GlcNAc...) asparagine" evidence="2">
    <location>
        <position position="710"/>
    </location>
</feature>
<feature type="glycosylation site" description="N-linked (GlcNAc...) asparagine" evidence="2">
    <location>
        <position position="719"/>
    </location>
</feature>
<feature type="glycosylation site" description="N-linked (GlcNAc...) asparagine" evidence="2">
    <location>
        <position position="735"/>
    </location>
</feature>
<feature type="glycosylation site" description="N-linked (GlcNAc...) asparagine" evidence="2">
    <location>
        <position position="792"/>
    </location>
</feature>
<feature type="glycosylation site" description="N-linked (GlcNAc...) asparagine" evidence="2">
    <location>
        <position position="852"/>
    </location>
</feature>
<feature type="glycosylation site" description="N-linked (GlcNAc...) asparagine" evidence="2">
    <location>
        <position position="863"/>
    </location>
</feature>
<feature type="glycosylation site" description="N-linked (GlcNAc...) asparagine" evidence="2">
    <location>
        <position position="880"/>
    </location>
</feature>
<feature type="glycosylation site" description="N-linked (GlcNAc...) asparagine" evidence="2">
    <location>
        <position position="962"/>
    </location>
</feature>
<feature type="glycosylation site" description="N-linked (GlcNAc...) asparagine" evidence="2">
    <location>
        <position position="993"/>
    </location>
</feature>
<dbReference type="EC" id="3.2.1.24"/>
<dbReference type="EMBL" id="AAFI02000023">
    <property type="protein sequence ID" value="EAL68302.1"/>
    <property type="molecule type" value="Genomic_DNA"/>
</dbReference>
<dbReference type="RefSeq" id="XP_642245.1">
    <property type="nucleotide sequence ID" value="XM_637153.1"/>
</dbReference>
<dbReference type="SMR" id="Q54YF7"/>
<dbReference type="FunCoup" id="Q54YF7">
    <property type="interactions" value="9"/>
</dbReference>
<dbReference type="STRING" id="44689.Q54YF7"/>
<dbReference type="GlyCosmos" id="Q54YF7">
    <property type="glycosylation" value="21 sites, No reported glycans"/>
</dbReference>
<dbReference type="GlyGen" id="Q54YF7">
    <property type="glycosylation" value="21 sites"/>
</dbReference>
<dbReference type="PaxDb" id="44689-DDB0231612"/>
<dbReference type="EnsemblProtists" id="EAL68302">
    <property type="protein sequence ID" value="EAL68302"/>
    <property type="gene ID" value="DDB_G0278259"/>
</dbReference>
<dbReference type="GeneID" id="8621454"/>
<dbReference type="KEGG" id="ddi:DDB_G0278259"/>
<dbReference type="dictyBase" id="DDB_G0278259">
    <property type="gene designation" value="manB"/>
</dbReference>
<dbReference type="VEuPathDB" id="AmoebaDB:DDB_G0278259"/>
<dbReference type="eggNOG" id="KOG1959">
    <property type="taxonomic scope" value="Eukaryota"/>
</dbReference>
<dbReference type="HOGENOM" id="CLU_004690_3_0_1"/>
<dbReference type="InParanoid" id="Q54YF7"/>
<dbReference type="OMA" id="CPWGQHP"/>
<dbReference type="PhylomeDB" id="Q54YF7"/>
<dbReference type="Reactome" id="R-DDI-8853383">
    <property type="pathway name" value="Lysosomal oligosaccharide catabolism"/>
</dbReference>
<dbReference type="PRO" id="PR:Q54YF7"/>
<dbReference type="Proteomes" id="UP000002195">
    <property type="component" value="Chromosome 3"/>
</dbReference>
<dbReference type="GO" id="GO:0005576">
    <property type="term" value="C:extracellular region"/>
    <property type="evidence" value="ECO:0007669"/>
    <property type="project" value="UniProtKB-SubCell"/>
</dbReference>
<dbReference type="GO" id="GO:0005764">
    <property type="term" value="C:lysosome"/>
    <property type="evidence" value="ECO:0000318"/>
    <property type="project" value="GO_Central"/>
</dbReference>
<dbReference type="GO" id="GO:0004559">
    <property type="term" value="F:alpha-mannosidase activity"/>
    <property type="evidence" value="ECO:0000318"/>
    <property type="project" value="GO_Central"/>
</dbReference>
<dbReference type="GO" id="GO:0030246">
    <property type="term" value="F:carbohydrate binding"/>
    <property type="evidence" value="ECO:0007669"/>
    <property type="project" value="InterPro"/>
</dbReference>
<dbReference type="GO" id="GO:0046872">
    <property type="term" value="F:metal ion binding"/>
    <property type="evidence" value="ECO:0007669"/>
    <property type="project" value="UniProtKB-KW"/>
</dbReference>
<dbReference type="GO" id="GO:0006013">
    <property type="term" value="P:mannose metabolic process"/>
    <property type="evidence" value="ECO:0007669"/>
    <property type="project" value="InterPro"/>
</dbReference>
<dbReference type="CDD" id="cd00451">
    <property type="entry name" value="GH38N_AMII_euk"/>
    <property type="match status" value="1"/>
</dbReference>
<dbReference type="FunFam" id="1.20.1270.50:FF:000001">
    <property type="entry name" value="Alpha-mannosidase"/>
    <property type="match status" value="1"/>
</dbReference>
<dbReference type="FunFam" id="2.70.98.30:FF:000014">
    <property type="entry name" value="Alpha-mannosidase"/>
    <property type="match status" value="1"/>
</dbReference>
<dbReference type="FunFam" id="2.60.40.1360:FF:000012">
    <property type="entry name" value="Alpha-mannosidase B"/>
    <property type="match status" value="1"/>
</dbReference>
<dbReference type="FunFam" id="3.20.110.10:FF:000012">
    <property type="entry name" value="Alpha-mannosidase B"/>
    <property type="match status" value="1"/>
</dbReference>
<dbReference type="Gene3D" id="2.60.40.1360">
    <property type="match status" value="1"/>
</dbReference>
<dbReference type="Gene3D" id="3.20.110.10">
    <property type="entry name" value="Glycoside hydrolase 38, N terminal domain"/>
    <property type="match status" value="1"/>
</dbReference>
<dbReference type="Gene3D" id="1.20.1270.50">
    <property type="entry name" value="Glycoside hydrolase family 38, central domain"/>
    <property type="match status" value="1"/>
</dbReference>
<dbReference type="Gene3D" id="2.60.40.1180">
    <property type="entry name" value="Golgi alpha-mannosidase II"/>
    <property type="match status" value="1"/>
</dbReference>
<dbReference type="Gene3D" id="2.70.98.30">
    <property type="entry name" value="Golgi alpha-mannosidase II, domain 4"/>
    <property type="match status" value="1"/>
</dbReference>
<dbReference type="InterPro" id="IPR011013">
    <property type="entry name" value="Gal_mutarotase_sf_dom"/>
</dbReference>
<dbReference type="InterPro" id="IPR011330">
    <property type="entry name" value="Glyco_hydro/deAcase_b/a-brl"/>
</dbReference>
<dbReference type="InterPro" id="IPR011682">
    <property type="entry name" value="Glyco_hydro_38_C"/>
</dbReference>
<dbReference type="InterPro" id="IPR015341">
    <property type="entry name" value="Glyco_hydro_38_cen"/>
</dbReference>
<dbReference type="InterPro" id="IPR037094">
    <property type="entry name" value="Glyco_hydro_38_cen_sf"/>
</dbReference>
<dbReference type="InterPro" id="IPR000602">
    <property type="entry name" value="Glyco_hydro_38_N"/>
</dbReference>
<dbReference type="InterPro" id="IPR027291">
    <property type="entry name" value="Glyco_hydro_38_N_sf"/>
</dbReference>
<dbReference type="InterPro" id="IPR028995">
    <property type="entry name" value="Glyco_hydro_57/38_cen_sf"/>
</dbReference>
<dbReference type="InterPro" id="IPR013780">
    <property type="entry name" value="Glyco_hydro_b"/>
</dbReference>
<dbReference type="InterPro" id="IPR050843">
    <property type="entry name" value="Glycosyl_Hydrlase_38"/>
</dbReference>
<dbReference type="PANTHER" id="PTHR11607">
    <property type="entry name" value="ALPHA-MANNOSIDASE"/>
    <property type="match status" value="1"/>
</dbReference>
<dbReference type="PANTHER" id="PTHR11607:SF19">
    <property type="entry name" value="ALPHA-MANNOSIDASE B"/>
    <property type="match status" value="1"/>
</dbReference>
<dbReference type="Pfam" id="PF09261">
    <property type="entry name" value="Alpha-mann_mid"/>
    <property type="match status" value="1"/>
</dbReference>
<dbReference type="Pfam" id="PF07748">
    <property type="entry name" value="Glyco_hydro_38C"/>
    <property type="match status" value="1"/>
</dbReference>
<dbReference type="Pfam" id="PF01074">
    <property type="entry name" value="Glyco_hydro_38N"/>
    <property type="match status" value="1"/>
</dbReference>
<dbReference type="SMART" id="SM00872">
    <property type="entry name" value="Alpha-mann_mid"/>
    <property type="match status" value="1"/>
</dbReference>
<dbReference type="SUPFAM" id="SSF88688">
    <property type="entry name" value="Families 57/38 glycoside transferase middle domain"/>
    <property type="match status" value="1"/>
</dbReference>
<dbReference type="SUPFAM" id="SSF74650">
    <property type="entry name" value="Galactose mutarotase-like"/>
    <property type="match status" value="1"/>
</dbReference>
<dbReference type="SUPFAM" id="SSF88713">
    <property type="entry name" value="Glycoside hydrolase/deacetylase"/>
    <property type="match status" value="1"/>
</dbReference>
<organism>
    <name type="scientific">Dictyostelium discoideum</name>
    <name type="common">Social amoeba</name>
    <dbReference type="NCBI Taxonomy" id="44689"/>
    <lineage>
        <taxon>Eukaryota</taxon>
        <taxon>Amoebozoa</taxon>
        <taxon>Evosea</taxon>
        <taxon>Eumycetozoa</taxon>
        <taxon>Dictyostelia</taxon>
        <taxon>Dictyosteliales</taxon>
        <taxon>Dictyosteliaceae</taxon>
        <taxon>Dictyostelium</taxon>
    </lineage>
</organism>
<evidence type="ECO:0000250" key="1"/>
<evidence type="ECO:0000255" key="2"/>
<evidence type="ECO:0000305" key="3"/>
<comment type="catalytic activity">
    <reaction>
        <text>Hydrolysis of terminal, non-reducing alpha-D-mannose residues in alpha-D-mannosides.</text>
        <dbReference type="EC" id="3.2.1.24"/>
    </reaction>
</comment>
<comment type="cofactor">
    <cofactor evidence="1">
        <name>Zn(2+)</name>
        <dbReference type="ChEBI" id="CHEBI:29105"/>
    </cofactor>
    <text evidence="1">Binds 1 zinc ion per subunit.</text>
</comment>
<comment type="subcellular location">
    <subcellularLocation>
        <location evidence="3">Secreted</location>
    </subcellularLocation>
</comment>
<comment type="similarity">
    <text evidence="3">Belongs to the glycosyl hydrolase 38 family.</text>
</comment>